<keyword id="KW-1185">Reference proteome</keyword>
<evidence type="ECO:0000305" key="1"/>
<accession>Q9SHY1</accession>
<accession>F4IBK1</accession>
<comment type="interaction">
    <interactant intactId="EBI-15923123">
        <id>Q9SHY1</id>
    </interactant>
    <interactant intactId="EBI-307155">
        <id>P93831</id>
        <label>CLF</label>
    </interactant>
    <organismsDiffer>false</organismsDiffer>
    <experiments>2</experiments>
</comment>
<comment type="interaction">
    <interactant intactId="EBI-15923123">
        <id>Q9SHY1</id>
    </interactant>
    <interactant intactId="EBI-532357">
        <id>Q39255</id>
        <label>SKP1A</label>
    </interactant>
    <organismsDiffer>false</organismsDiffer>
    <experiments>2</experiments>
</comment>
<comment type="sequence caution" evidence="1">
    <conflict type="erroneous gene model prediction">
        <sequence resource="EMBL-CDS" id="AAF23839"/>
    </conflict>
</comment>
<organism>
    <name type="scientific">Arabidopsis thaliana</name>
    <name type="common">Mouse-ear cress</name>
    <dbReference type="NCBI Taxonomy" id="3702"/>
    <lineage>
        <taxon>Eukaryota</taxon>
        <taxon>Viridiplantae</taxon>
        <taxon>Streptophyta</taxon>
        <taxon>Embryophyta</taxon>
        <taxon>Tracheophyta</taxon>
        <taxon>Spermatophyta</taxon>
        <taxon>Magnoliopsida</taxon>
        <taxon>eudicotyledons</taxon>
        <taxon>Gunneridae</taxon>
        <taxon>Pentapetalae</taxon>
        <taxon>rosids</taxon>
        <taxon>malvids</taxon>
        <taxon>Brassicales</taxon>
        <taxon>Brassicaceae</taxon>
        <taxon>Camelineae</taxon>
        <taxon>Arabidopsis</taxon>
    </lineage>
</organism>
<proteinExistence type="evidence at protein level"/>
<feature type="chain" id="PRO_0000396032" description="Probable F-box protein At1g65740">
    <location>
        <begin position="1"/>
        <end position="371"/>
    </location>
</feature>
<feature type="domain" description="F-box">
    <location>
        <begin position="2"/>
        <end position="49"/>
    </location>
</feature>
<sequence length="371" mass="42298">MVDWSTLPEELLHFIAARSFSLVEYKRFSSICVSWHSSVSGVKKNPFHRRPLIDFNPIAPSETLLEDHVFSCNPGAFLSRAAFFRVTLSSSPSKGWIIKSDMDTNSGRFHLLNPLSRFPLRISSESLDLLDFTVSEIQESYAVLKDAKGRLPNPGYQRSALVKVKEGDDHHHGILGIGRDGTINYWNGNVLNGFKQMGHHFSDIIVHKGVTYVLDSKGIVWCINSDLEMSRYETSLDENMTNGCRRYYMRFVDCCGELYVIKRLPKENSRKRKSTLFQFSRTAGFKVYKIDKELAKWVEVKTLGDNAFVMATDTCFSVLAHEYYGCLPNSIYFIEDLEPKVFQLDNGNGSSITRKSESSESSFEMFFPSFL</sequence>
<name>FB317_ARATH</name>
<gene>
    <name type="ordered locus">At1g65740</name>
    <name type="ORF">F1E22.11</name>
</gene>
<reference key="1">
    <citation type="journal article" date="2000" name="Nature">
        <title>Sequence and analysis of chromosome 1 of the plant Arabidopsis thaliana.</title>
        <authorList>
            <person name="Theologis A."/>
            <person name="Ecker J.R."/>
            <person name="Palm C.J."/>
            <person name="Federspiel N.A."/>
            <person name="Kaul S."/>
            <person name="White O."/>
            <person name="Alonso J."/>
            <person name="Altafi H."/>
            <person name="Araujo R."/>
            <person name="Bowman C.L."/>
            <person name="Brooks S.Y."/>
            <person name="Buehler E."/>
            <person name="Chan A."/>
            <person name="Chao Q."/>
            <person name="Chen H."/>
            <person name="Cheuk R.F."/>
            <person name="Chin C.W."/>
            <person name="Chung M.K."/>
            <person name="Conn L."/>
            <person name="Conway A.B."/>
            <person name="Conway A.R."/>
            <person name="Creasy T.H."/>
            <person name="Dewar K."/>
            <person name="Dunn P."/>
            <person name="Etgu P."/>
            <person name="Feldblyum T.V."/>
            <person name="Feng J.-D."/>
            <person name="Fong B."/>
            <person name="Fujii C.Y."/>
            <person name="Gill J.E."/>
            <person name="Goldsmith A.D."/>
            <person name="Haas B."/>
            <person name="Hansen N.F."/>
            <person name="Hughes B."/>
            <person name="Huizar L."/>
            <person name="Hunter J.L."/>
            <person name="Jenkins J."/>
            <person name="Johnson-Hopson C."/>
            <person name="Khan S."/>
            <person name="Khaykin E."/>
            <person name="Kim C.J."/>
            <person name="Koo H.L."/>
            <person name="Kremenetskaia I."/>
            <person name="Kurtz D.B."/>
            <person name="Kwan A."/>
            <person name="Lam B."/>
            <person name="Langin-Hooper S."/>
            <person name="Lee A."/>
            <person name="Lee J.M."/>
            <person name="Lenz C.A."/>
            <person name="Li J.H."/>
            <person name="Li Y.-P."/>
            <person name="Lin X."/>
            <person name="Liu S.X."/>
            <person name="Liu Z.A."/>
            <person name="Luros J.S."/>
            <person name="Maiti R."/>
            <person name="Marziali A."/>
            <person name="Militscher J."/>
            <person name="Miranda M."/>
            <person name="Nguyen M."/>
            <person name="Nierman W.C."/>
            <person name="Osborne B.I."/>
            <person name="Pai G."/>
            <person name="Peterson J."/>
            <person name="Pham P.K."/>
            <person name="Rizzo M."/>
            <person name="Rooney T."/>
            <person name="Rowley D."/>
            <person name="Sakano H."/>
            <person name="Salzberg S.L."/>
            <person name="Schwartz J.R."/>
            <person name="Shinn P."/>
            <person name="Southwick A.M."/>
            <person name="Sun H."/>
            <person name="Tallon L.J."/>
            <person name="Tambunga G."/>
            <person name="Toriumi M.J."/>
            <person name="Town C.D."/>
            <person name="Utterback T."/>
            <person name="Van Aken S."/>
            <person name="Vaysberg M."/>
            <person name="Vysotskaia V.S."/>
            <person name="Walker M."/>
            <person name="Wu D."/>
            <person name="Yu G."/>
            <person name="Fraser C.M."/>
            <person name="Venter J.C."/>
            <person name="Davis R.W."/>
        </authorList>
    </citation>
    <scope>NUCLEOTIDE SEQUENCE [LARGE SCALE GENOMIC DNA]</scope>
    <source>
        <strain>cv. Columbia</strain>
    </source>
</reference>
<reference key="2">
    <citation type="journal article" date="2017" name="Plant J.">
        <title>Araport11: a complete reannotation of the Arabidopsis thaliana reference genome.</title>
        <authorList>
            <person name="Cheng C.Y."/>
            <person name="Krishnakumar V."/>
            <person name="Chan A.P."/>
            <person name="Thibaud-Nissen F."/>
            <person name="Schobel S."/>
            <person name="Town C.D."/>
        </authorList>
    </citation>
    <scope>GENOME REANNOTATION</scope>
    <source>
        <strain>cv. Columbia</strain>
    </source>
</reference>
<protein>
    <recommendedName>
        <fullName>Probable F-box protein At1g65740</fullName>
    </recommendedName>
</protein>
<dbReference type="EMBL" id="AC007234">
    <property type="protein sequence ID" value="AAF23839.1"/>
    <property type="status" value="ALT_SEQ"/>
    <property type="molecule type" value="Genomic_DNA"/>
</dbReference>
<dbReference type="EMBL" id="CP002684">
    <property type="protein sequence ID" value="AEE34419.1"/>
    <property type="molecule type" value="Genomic_DNA"/>
</dbReference>
<dbReference type="RefSeq" id="NP_176751.1">
    <property type="nucleotide sequence ID" value="NM_105248.1"/>
</dbReference>
<dbReference type="BioGRID" id="28106">
    <property type="interactions" value="2"/>
</dbReference>
<dbReference type="DIP" id="DIP-59629N"/>
<dbReference type="FunCoup" id="Q9SHY1">
    <property type="interactions" value="3"/>
</dbReference>
<dbReference type="IntAct" id="Q9SHY1">
    <property type="interactions" value="3"/>
</dbReference>
<dbReference type="STRING" id="3702.Q9SHY1"/>
<dbReference type="PaxDb" id="3702-AT1G65740.1"/>
<dbReference type="EnsemblPlants" id="AT1G65740.1">
    <property type="protein sequence ID" value="AT1G65740.1"/>
    <property type="gene ID" value="AT1G65740"/>
</dbReference>
<dbReference type="GeneID" id="842885"/>
<dbReference type="Gramene" id="AT1G65740.1">
    <property type="protein sequence ID" value="AT1G65740.1"/>
    <property type="gene ID" value="AT1G65740"/>
</dbReference>
<dbReference type="KEGG" id="ath:AT1G65740"/>
<dbReference type="Araport" id="AT1G65740"/>
<dbReference type="TAIR" id="AT1G65740">
    <property type="gene designation" value="UCL1"/>
</dbReference>
<dbReference type="eggNOG" id="ENOG502RY64">
    <property type="taxonomic scope" value="Eukaryota"/>
</dbReference>
<dbReference type="HOGENOM" id="CLU_019286_1_0_1"/>
<dbReference type="InParanoid" id="Q9SHY1"/>
<dbReference type="OMA" id="FRIECAT"/>
<dbReference type="PRO" id="PR:Q9SHY1"/>
<dbReference type="Proteomes" id="UP000006548">
    <property type="component" value="Chromosome 1"/>
</dbReference>
<dbReference type="ExpressionAtlas" id="Q9SHY1">
    <property type="expression patterns" value="baseline and differential"/>
</dbReference>
<dbReference type="InterPro" id="IPR005174">
    <property type="entry name" value="KIB1-4_b-propeller"/>
</dbReference>
<dbReference type="InterPro" id="IPR051304">
    <property type="entry name" value="SCF_F-box_domain"/>
</dbReference>
<dbReference type="PANTHER" id="PTHR47123:SF25">
    <property type="entry name" value="F-BOX PROTEIN"/>
    <property type="match status" value="1"/>
</dbReference>
<dbReference type="PANTHER" id="PTHR47123">
    <property type="entry name" value="F-BOX PROTEIN SKIP23"/>
    <property type="match status" value="1"/>
</dbReference>
<dbReference type="Pfam" id="PF03478">
    <property type="entry name" value="Beta-prop_KIB1-4"/>
    <property type="match status" value="1"/>
</dbReference>